<comment type="function">
    <text evidence="1">Cytoplasmic poly(A) RNA polymerase that adds successive AMP monomers to the 3'-end of specific RNAs, forming a poly(A) tail. In contrast to the canonical nuclear poly(A) RNA polymerase, it only adds poly(A) to selected cytoplasmic mRNAs during oocyte maturation. Plays a central role during oocyte maturation by mediating polyadenylation of dormant mRNAs, which contain 5'AAUAAA-3' sequence in their 3'-UTR. In immature oocytes, polyadenylation of poly(A) tails is counteracted by the ribonuclease parn. During maturation parn is excluded from the ribonucleoprotein complex, allowing poly(A) elongation and activation of mRNAs. May not play a role in replication-dependent histone mRNA degradation (By similarity).</text>
</comment>
<comment type="catalytic activity">
    <reaction>
        <text>RNA(n) + ATP = RNA(n)-3'-adenine ribonucleotide + diphosphate</text>
        <dbReference type="Rhea" id="RHEA:11332"/>
        <dbReference type="Rhea" id="RHEA-COMP:14527"/>
        <dbReference type="Rhea" id="RHEA-COMP:17347"/>
        <dbReference type="ChEBI" id="CHEBI:30616"/>
        <dbReference type="ChEBI" id="CHEBI:33019"/>
        <dbReference type="ChEBI" id="CHEBI:140395"/>
        <dbReference type="ChEBI" id="CHEBI:173115"/>
        <dbReference type="EC" id="2.7.7.19"/>
    </reaction>
</comment>
<comment type="cofactor">
    <cofactor evidence="1">
        <name>Mg(2+)</name>
        <dbReference type="ChEBI" id="CHEBI:18420"/>
    </cofactor>
    <cofactor evidence="1">
        <name>Mn(2+)</name>
        <dbReference type="ChEBI" id="CHEBI:29035"/>
    </cofactor>
</comment>
<comment type="subunit">
    <text evidence="1">Component of a complex at least composed of cpeb1, cpsf1, tent2/gld2, pabpc1/ePAB, parn and sympk. Following oocyte maturation, parn is expelled from the complex. Interacts with rbm9 and sympk (By similarity).</text>
</comment>
<comment type="subcellular location">
    <subcellularLocation>
        <location evidence="1">Cytoplasm</location>
    </subcellularLocation>
</comment>
<comment type="alternative products">
    <event type="alternative splicing"/>
    <isoform>
        <id>Q0VFA3-1</id>
        <name>1</name>
        <sequence type="displayed"/>
    </isoform>
    <isoform>
        <id>Q0VFA3-2</id>
        <name>2</name>
        <sequence type="described" ref="VSP_034327"/>
    </isoform>
</comment>
<comment type="similarity">
    <text evidence="4">Belongs to the DNA polymerase type-B-like family. GLD2 subfamily.</text>
</comment>
<dbReference type="EC" id="2.7.7.19"/>
<dbReference type="EMBL" id="BC118909">
    <property type="protein sequence ID" value="AAI18910.1"/>
    <property type="molecule type" value="mRNA"/>
</dbReference>
<dbReference type="EMBL" id="BC136215">
    <property type="protein sequence ID" value="AAI36216.1"/>
    <property type="molecule type" value="mRNA"/>
</dbReference>
<dbReference type="RefSeq" id="NP_001072915.1">
    <molecule id="Q0VFA3-1"/>
    <property type="nucleotide sequence ID" value="NM_001079447.1"/>
</dbReference>
<dbReference type="SMR" id="Q0VFA3"/>
<dbReference type="FunCoup" id="Q0VFA3">
    <property type="interactions" value="2019"/>
</dbReference>
<dbReference type="STRING" id="8364.ENSXETP00000033871"/>
<dbReference type="PaxDb" id="8364-ENSXETP00000062194"/>
<dbReference type="DNASU" id="780377"/>
<dbReference type="GeneID" id="780377"/>
<dbReference type="KEGG" id="xtr:780377"/>
<dbReference type="AGR" id="Xenbase:XB-GENE-1217408"/>
<dbReference type="CTD" id="167153"/>
<dbReference type="Xenbase" id="XB-GENE-1217408">
    <property type="gene designation" value="tent2"/>
</dbReference>
<dbReference type="eggNOG" id="KOG2277">
    <property type="taxonomic scope" value="Eukaryota"/>
</dbReference>
<dbReference type="InParanoid" id="Q0VFA3"/>
<dbReference type="OrthoDB" id="2274644at2759"/>
<dbReference type="TreeFam" id="TF315661"/>
<dbReference type="Proteomes" id="UP000008143">
    <property type="component" value="Chromosome 1"/>
</dbReference>
<dbReference type="GO" id="GO:0005737">
    <property type="term" value="C:cytoplasm"/>
    <property type="evidence" value="ECO:0007669"/>
    <property type="project" value="UniProtKB-SubCell"/>
</dbReference>
<dbReference type="GO" id="GO:0005524">
    <property type="term" value="F:ATP binding"/>
    <property type="evidence" value="ECO:0007669"/>
    <property type="project" value="UniProtKB-KW"/>
</dbReference>
<dbReference type="GO" id="GO:0046872">
    <property type="term" value="F:metal ion binding"/>
    <property type="evidence" value="ECO:0007669"/>
    <property type="project" value="UniProtKB-KW"/>
</dbReference>
<dbReference type="GO" id="GO:1990817">
    <property type="term" value="F:poly(A) RNA polymerase activity"/>
    <property type="evidence" value="ECO:0000250"/>
    <property type="project" value="UniProtKB"/>
</dbReference>
<dbReference type="GO" id="GO:0006397">
    <property type="term" value="P:mRNA processing"/>
    <property type="evidence" value="ECO:0007669"/>
    <property type="project" value="UniProtKB-KW"/>
</dbReference>
<dbReference type="GO" id="GO:2000626">
    <property type="term" value="P:negative regulation of miRNA catabolic process"/>
    <property type="evidence" value="ECO:0000250"/>
    <property type="project" value="UniProtKB"/>
</dbReference>
<dbReference type="GO" id="GO:0048477">
    <property type="term" value="P:oogenesis"/>
    <property type="evidence" value="ECO:0007669"/>
    <property type="project" value="UniProtKB-KW"/>
</dbReference>
<dbReference type="CDD" id="cd05402">
    <property type="entry name" value="NT_PAP_TUTase"/>
    <property type="match status" value="1"/>
</dbReference>
<dbReference type="FunFam" id="1.10.1410.10:FF:000007">
    <property type="entry name" value="poly(A) RNA polymerase GLD2 isoform X1"/>
    <property type="match status" value="1"/>
</dbReference>
<dbReference type="FunFam" id="3.30.460.10:FF:000022">
    <property type="entry name" value="poly(A) RNA polymerase GLD2 isoform X1"/>
    <property type="match status" value="1"/>
</dbReference>
<dbReference type="Gene3D" id="1.10.1410.10">
    <property type="match status" value="1"/>
</dbReference>
<dbReference type="Gene3D" id="3.30.460.10">
    <property type="entry name" value="Beta Polymerase, domain 2"/>
    <property type="match status" value="1"/>
</dbReference>
<dbReference type="InterPro" id="IPR054708">
    <property type="entry name" value="MTPAP-like_central"/>
</dbReference>
<dbReference type="InterPro" id="IPR043519">
    <property type="entry name" value="NT_sf"/>
</dbReference>
<dbReference type="InterPro" id="IPR002058">
    <property type="entry name" value="PAP_assoc"/>
</dbReference>
<dbReference type="PANTHER" id="PTHR12271">
    <property type="entry name" value="POLY A POLYMERASE CID PAP -RELATED"/>
    <property type="match status" value="1"/>
</dbReference>
<dbReference type="PANTHER" id="PTHR12271:SF40">
    <property type="entry name" value="POLY(A) RNA POLYMERASE GLD2"/>
    <property type="match status" value="1"/>
</dbReference>
<dbReference type="Pfam" id="PF22600">
    <property type="entry name" value="MTPAP-like_central"/>
    <property type="match status" value="1"/>
</dbReference>
<dbReference type="Pfam" id="PF03828">
    <property type="entry name" value="PAP_assoc"/>
    <property type="match status" value="1"/>
</dbReference>
<dbReference type="SUPFAM" id="SSF81301">
    <property type="entry name" value="Nucleotidyltransferase"/>
    <property type="match status" value="1"/>
</dbReference>
<dbReference type="SUPFAM" id="SSF81631">
    <property type="entry name" value="PAP/OAS1 substrate-binding domain"/>
    <property type="match status" value="1"/>
</dbReference>
<gene>
    <name type="primary">tent2</name>
    <name type="synonym">gld2</name>
    <name type="synonym">papd4</name>
</gene>
<sequence>MYPNSPSQGRIPLPLPCEQQQPPLEQSQEQPLQPQPLQPQQASGYLSKLPVSVAPELLSPEQFIQASINLHNNVNFARMLMNANLLAVPPVSPPPWSYRDQSPLISPASPSSSFQNRKRRSDEGNIAYDVKRQKFQSPQEQTVNHQAVPLRGDLGCSYPGSPAFPLLQSPSPPVLKGHVPNSGECWLYDHVDTTLPVAKDKLSKQILELFQALQQQVCDLKKKDICRAELQREIQQIFPQSRLYLVGSSLNGFGTRSSDADLCLVLKDEPMNQHTEARHILSLLHKHFYTRLSYIERPQFIKAKVPIVKFRDKVSGAEFDLNVNNVVGIRNTFLLRTYAYIENRVRPLVLVIKMWANYHGLNDASRGTLSSYTLVLMALHYLQTLPEPIIPSLQKKYPECFDSTMQLHLVHHAPRNIPKYLSKNETPLGDLLLGFLKYFAIEFDWSKDIISVREAKALPRSDDYEWRNKFICVEEPYDRTNTARAVYERQKFDMIRAEFLRAWVALRDNRDLYSLLPWKGIMKKMNSL</sequence>
<evidence type="ECO:0000250" key="1"/>
<evidence type="ECO:0000256" key="2">
    <source>
        <dbReference type="SAM" id="MobiDB-lite"/>
    </source>
</evidence>
<evidence type="ECO:0000303" key="3">
    <source ref="1"/>
</evidence>
<evidence type="ECO:0000305" key="4"/>
<organism>
    <name type="scientific">Xenopus tropicalis</name>
    <name type="common">Western clawed frog</name>
    <name type="synonym">Silurana tropicalis</name>
    <dbReference type="NCBI Taxonomy" id="8364"/>
    <lineage>
        <taxon>Eukaryota</taxon>
        <taxon>Metazoa</taxon>
        <taxon>Chordata</taxon>
        <taxon>Craniata</taxon>
        <taxon>Vertebrata</taxon>
        <taxon>Euteleostomi</taxon>
        <taxon>Amphibia</taxon>
        <taxon>Batrachia</taxon>
        <taxon>Anura</taxon>
        <taxon>Pipoidea</taxon>
        <taxon>Pipidae</taxon>
        <taxon>Xenopodinae</taxon>
        <taxon>Xenopus</taxon>
        <taxon>Silurana</taxon>
    </lineage>
</organism>
<proteinExistence type="evidence at transcript level"/>
<name>GLD2_XENTR</name>
<accession>Q0VFA3</accession>
<accession>A4IIZ6</accession>
<protein>
    <recommendedName>
        <fullName>Poly(A) RNA polymerase GLD2</fullName>
        <ecNumber>2.7.7.19</ecNumber>
    </recommendedName>
    <alternativeName>
        <fullName>PAP-associated domain-containing protein 4</fullName>
    </alternativeName>
</protein>
<keyword id="KW-0025">Alternative splicing</keyword>
<keyword id="KW-0067">ATP-binding</keyword>
<keyword id="KW-0963">Cytoplasm</keyword>
<keyword id="KW-0217">Developmental protein</keyword>
<keyword id="KW-0221">Differentiation</keyword>
<keyword id="KW-0460">Magnesium</keyword>
<keyword id="KW-0464">Manganese</keyword>
<keyword id="KW-0479">Metal-binding</keyword>
<keyword id="KW-0507">mRNA processing</keyword>
<keyword id="KW-0547">Nucleotide-binding</keyword>
<keyword id="KW-0896">Oogenesis</keyword>
<keyword id="KW-1185">Reference proteome</keyword>
<keyword id="KW-0808">Transferase</keyword>
<reference key="1">
    <citation type="submission" date="2006-07" db="EMBL/GenBank/DDBJ databases">
        <authorList>
            <consortium name="NIH - Xenopus Gene Collection (XGC) project"/>
        </authorList>
    </citation>
    <scope>NUCLEOTIDE SEQUENCE [LARGE SCALE MRNA] (ISOFORMS 1 AND 2)</scope>
    <source>
        <tissue>Brain</tissue>
    </source>
</reference>
<feature type="chain" id="PRO_0000341555" description="Poly(A) RNA polymerase GLD2">
    <location>
        <begin position="1"/>
        <end position="528"/>
    </location>
</feature>
<feature type="domain" description="PAP-associated">
    <location>
        <begin position="428"/>
        <end position="481"/>
    </location>
</feature>
<feature type="region of interest" description="Disordered" evidence="2">
    <location>
        <begin position="1"/>
        <end position="41"/>
    </location>
</feature>
<feature type="region of interest" description="Disordered" evidence="2">
    <location>
        <begin position="99"/>
        <end position="121"/>
    </location>
</feature>
<feature type="compositionally biased region" description="Low complexity" evidence="2">
    <location>
        <begin position="16"/>
        <end position="32"/>
    </location>
</feature>
<feature type="compositionally biased region" description="Low complexity" evidence="2">
    <location>
        <begin position="102"/>
        <end position="113"/>
    </location>
</feature>
<feature type="binding site" evidence="1">
    <location>
        <position position="259"/>
    </location>
    <ligand>
        <name>Mg(2+)</name>
        <dbReference type="ChEBI" id="CHEBI:18420"/>
        <note>catalytic</note>
    </ligand>
</feature>
<feature type="binding site" evidence="1">
    <location>
        <position position="261"/>
    </location>
    <ligand>
        <name>Mg(2+)</name>
        <dbReference type="ChEBI" id="CHEBI:18420"/>
        <note>catalytic</note>
    </ligand>
</feature>
<feature type="splice variant" id="VSP_034327" description="In isoform 2." evidence="3">
    <location>
        <begin position="35"/>
        <end position="39"/>
    </location>
</feature>